<gene>
    <name evidence="1" type="primary">gpmI</name>
    <name type="ordered locus">Shal_0043</name>
</gene>
<dbReference type="EC" id="5.4.2.12" evidence="1"/>
<dbReference type="EMBL" id="CP000931">
    <property type="protein sequence ID" value="ABZ74619.1"/>
    <property type="molecule type" value="Genomic_DNA"/>
</dbReference>
<dbReference type="RefSeq" id="WP_012275177.1">
    <property type="nucleotide sequence ID" value="NC_010334.1"/>
</dbReference>
<dbReference type="SMR" id="B0TLE6"/>
<dbReference type="STRING" id="458817.Shal_0043"/>
<dbReference type="KEGG" id="shl:Shal_0043"/>
<dbReference type="eggNOG" id="COG0696">
    <property type="taxonomic scope" value="Bacteria"/>
</dbReference>
<dbReference type="HOGENOM" id="CLU_026099_2_0_6"/>
<dbReference type="OrthoDB" id="9800863at2"/>
<dbReference type="UniPathway" id="UPA00109">
    <property type="reaction ID" value="UER00186"/>
</dbReference>
<dbReference type="Proteomes" id="UP000001317">
    <property type="component" value="Chromosome"/>
</dbReference>
<dbReference type="GO" id="GO:0005829">
    <property type="term" value="C:cytosol"/>
    <property type="evidence" value="ECO:0007669"/>
    <property type="project" value="TreeGrafter"/>
</dbReference>
<dbReference type="GO" id="GO:0030145">
    <property type="term" value="F:manganese ion binding"/>
    <property type="evidence" value="ECO:0007669"/>
    <property type="project" value="UniProtKB-UniRule"/>
</dbReference>
<dbReference type="GO" id="GO:0004619">
    <property type="term" value="F:phosphoglycerate mutase activity"/>
    <property type="evidence" value="ECO:0007669"/>
    <property type="project" value="UniProtKB-EC"/>
</dbReference>
<dbReference type="GO" id="GO:0006007">
    <property type="term" value="P:glucose catabolic process"/>
    <property type="evidence" value="ECO:0007669"/>
    <property type="project" value="InterPro"/>
</dbReference>
<dbReference type="GO" id="GO:0006096">
    <property type="term" value="P:glycolytic process"/>
    <property type="evidence" value="ECO:0007669"/>
    <property type="project" value="UniProtKB-UniRule"/>
</dbReference>
<dbReference type="CDD" id="cd16010">
    <property type="entry name" value="iPGM"/>
    <property type="match status" value="1"/>
</dbReference>
<dbReference type="FunFam" id="3.40.1450.10:FF:000001">
    <property type="entry name" value="2,3-bisphosphoglycerate-independent phosphoglycerate mutase"/>
    <property type="match status" value="1"/>
</dbReference>
<dbReference type="FunFam" id="3.40.720.10:FF:000001">
    <property type="entry name" value="2,3-bisphosphoglycerate-independent phosphoglycerate mutase"/>
    <property type="match status" value="1"/>
</dbReference>
<dbReference type="Gene3D" id="3.40.720.10">
    <property type="entry name" value="Alkaline Phosphatase, subunit A"/>
    <property type="match status" value="1"/>
</dbReference>
<dbReference type="Gene3D" id="3.40.1450.10">
    <property type="entry name" value="BPG-independent phosphoglycerate mutase, domain B"/>
    <property type="match status" value="1"/>
</dbReference>
<dbReference type="HAMAP" id="MF_01038">
    <property type="entry name" value="GpmI"/>
    <property type="match status" value="1"/>
</dbReference>
<dbReference type="InterPro" id="IPR017850">
    <property type="entry name" value="Alkaline_phosphatase_core_sf"/>
</dbReference>
<dbReference type="InterPro" id="IPR011258">
    <property type="entry name" value="BPG-indep_PGM_N"/>
</dbReference>
<dbReference type="InterPro" id="IPR006124">
    <property type="entry name" value="Metalloenzyme"/>
</dbReference>
<dbReference type="InterPro" id="IPR036646">
    <property type="entry name" value="PGAM_B_sf"/>
</dbReference>
<dbReference type="InterPro" id="IPR005995">
    <property type="entry name" value="Pgm_bpd_ind"/>
</dbReference>
<dbReference type="NCBIfam" id="TIGR01307">
    <property type="entry name" value="pgm_bpd_ind"/>
    <property type="match status" value="1"/>
</dbReference>
<dbReference type="NCBIfam" id="NF003897">
    <property type="entry name" value="PRK05434.1-5"/>
    <property type="match status" value="1"/>
</dbReference>
<dbReference type="PANTHER" id="PTHR31637">
    <property type="entry name" value="2,3-BISPHOSPHOGLYCERATE-INDEPENDENT PHOSPHOGLYCERATE MUTASE"/>
    <property type="match status" value="1"/>
</dbReference>
<dbReference type="PANTHER" id="PTHR31637:SF0">
    <property type="entry name" value="2,3-BISPHOSPHOGLYCERATE-INDEPENDENT PHOSPHOGLYCERATE MUTASE"/>
    <property type="match status" value="1"/>
</dbReference>
<dbReference type="Pfam" id="PF06415">
    <property type="entry name" value="iPGM_N"/>
    <property type="match status" value="1"/>
</dbReference>
<dbReference type="Pfam" id="PF01676">
    <property type="entry name" value="Metalloenzyme"/>
    <property type="match status" value="1"/>
</dbReference>
<dbReference type="PIRSF" id="PIRSF001492">
    <property type="entry name" value="IPGAM"/>
    <property type="match status" value="1"/>
</dbReference>
<dbReference type="SUPFAM" id="SSF64158">
    <property type="entry name" value="2,3-Bisphosphoglycerate-independent phosphoglycerate mutase, substrate-binding domain"/>
    <property type="match status" value="1"/>
</dbReference>
<dbReference type="SUPFAM" id="SSF53649">
    <property type="entry name" value="Alkaline phosphatase-like"/>
    <property type="match status" value="1"/>
</dbReference>
<accession>B0TLE6</accession>
<keyword id="KW-0324">Glycolysis</keyword>
<keyword id="KW-0413">Isomerase</keyword>
<keyword id="KW-0464">Manganese</keyword>
<keyword id="KW-0479">Metal-binding</keyword>
<feature type="chain" id="PRO_1000084312" description="2,3-bisphosphoglycerate-independent phosphoglycerate mutase">
    <location>
        <begin position="1"/>
        <end position="514"/>
    </location>
</feature>
<feature type="active site" description="Phosphoserine intermediate" evidence="1">
    <location>
        <position position="64"/>
    </location>
</feature>
<feature type="binding site" evidence="1">
    <location>
        <position position="14"/>
    </location>
    <ligand>
        <name>Mn(2+)</name>
        <dbReference type="ChEBI" id="CHEBI:29035"/>
        <label>2</label>
    </ligand>
</feature>
<feature type="binding site" evidence="1">
    <location>
        <position position="64"/>
    </location>
    <ligand>
        <name>Mn(2+)</name>
        <dbReference type="ChEBI" id="CHEBI:29035"/>
        <label>2</label>
    </ligand>
</feature>
<feature type="binding site" evidence="1">
    <location>
        <position position="125"/>
    </location>
    <ligand>
        <name>substrate</name>
    </ligand>
</feature>
<feature type="binding site" evidence="1">
    <location>
        <begin position="155"/>
        <end position="156"/>
    </location>
    <ligand>
        <name>substrate</name>
    </ligand>
</feature>
<feature type="binding site" evidence="1">
    <location>
        <position position="187"/>
    </location>
    <ligand>
        <name>substrate</name>
    </ligand>
</feature>
<feature type="binding site" evidence="1">
    <location>
        <position position="193"/>
    </location>
    <ligand>
        <name>substrate</name>
    </ligand>
</feature>
<feature type="binding site" evidence="1">
    <location>
        <begin position="263"/>
        <end position="266"/>
    </location>
    <ligand>
        <name>substrate</name>
    </ligand>
</feature>
<feature type="binding site" evidence="1">
    <location>
        <position position="336"/>
    </location>
    <ligand>
        <name>substrate</name>
    </ligand>
</feature>
<feature type="binding site" evidence="1">
    <location>
        <position position="403"/>
    </location>
    <ligand>
        <name>Mn(2+)</name>
        <dbReference type="ChEBI" id="CHEBI:29035"/>
        <label>1</label>
    </ligand>
</feature>
<feature type="binding site" evidence="1">
    <location>
        <position position="407"/>
    </location>
    <ligand>
        <name>Mn(2+)</name>
        <dbReference type="ChEBI" id="CHEBI:29035"/>
        <label>1</label>
    </ligand>
</feature>
<feature type="binding site" evidence="1">
    <location>
        <position position="444"/>
    </location>
    <ligand>
        <name>Mn(2+)</name>
        <dbReference type="ChEBI" id="CHEBI:29035"/>
        <label>2</label>
    </ligand>
</feature>
<feature type="binding site" evidence="1">
    <location>
        <position position="445"/>
    </location>
    <ligand>
        <name>Mn(2+)</name>
        <dbReference type="ChEBI" id="CHEBI:29035"/>
        <label>2</label>
    </ligand>
</feature>
<feature type="binding site" evidence="1">
    <location>
        <position position="463"/>
    </location>
    <ligand>
        <name>Mn(2+)</name>
        <dbReference type="ChEBI" id="CHEBI:29035"/>
        <label>1</label>
    </ligand>
</feature>
<comment type="function">
    <text evidence="1">Catalyzes the interconversion of 2-phosphoglycerate and 3-phosphoglycerate.</text>
</comment>
<comment type="catalytic activity">
    <reaction evidence="1">
        <text>(2R)-2-phosphoglycerate = (2R)-3-phosphoglycerate</text>
        <dbReference type="Rhea" id="RHEA:15901"/>
        <dbReference type="ChEBI" id="CHEBI:58272"/>
        <dbReference type="ChEBI" id="CHEBI:58289"/>
        <dbReference type="EC" id="5.4.2.12"/>
    </reaction>
</comment>
<comment type="cofactor">
    <cofactor evidence="1">
        <name>Mn(2+)</name>
        <dbReference type="ChEBI" id="CHEBI:29035"/>
    </cofactor>
    <text evidence="1">Binds 2 manganese ions per subunit.</text>
</comment>
<comment type="pathway">
    <text evidence="1">Carbohydrate degradation; glycolysis; pyruvate from D-glyceraldehyde 3-phosphate: step 3/5.</text>
</comment>
<comment type="subunit">
    <text evidence="1">Monomer.</text>
</comment>
<comment type="similarity">
    <text evidence="1">Belongs to the BPG-independent phosphoglycerate mutase family.</text>
</comment>
<evidence type="ECO:0000255" key="1">
    <source>
        <dbReference type="HAMAP-Rule" id="MF_01038"/>
    </source>
</evidence>
<protein>
    <recommendedName>
        <fullName evidence="1">2,3-bisphosphoglycerate-independent phosphoglycerate mutase</fullName>
        <shortName evidence="1">BPG-independent PGAM</shortName>
        <shortName evidence="1">Phosphoglyceromutase</shortName>
        <shortName evidence="1">iPGM</shortName>
        <ecNumber evidence="1">5.4.2.12</ecNumber>
    </recommendedName>
</protein>
<proteinExistence type="inferred from homology"/>
<organism>
    <name type="scientific">Shewanella halifaxensis (strain HAW-EB4)</name>
    <dbReference type="NCBI Taxonomy" id="458817"/>
    <lineage>
        <taxon>Bacteria</taxon>
        <taxon>Pseudomonadati</taxon>
        <taxon>Pseudomonadota</taxon>
        <taxon>Gammaproteobacteria</taxon>
        <taxon>Alteromonadales</taxon>
        <taxon>Shewanellaceae</taxon>
        <taxon>Shewanella</taxon>
    </lineage>
</organism>
<name>GPMI_SHEHH</name>
<reference key="1">
    <citation type="submission" date="2008-01" db="EMBL/GenBank/DDBJ databases">
        <title>Complete sequence of Shewanella halifaxensis HAW-EB4.</title>
        <authorList>
            <consortium name="US DOE Joint Genome Institute"/>
            <person name="Copeland A."/>
            <person name="Lucas S."/>
            <person name="Lapidus A."/>
            <person name="Glavina del Rio T."/>
            <person name="Dalin E."/>
            <person name="Tice H."/>
            <person name="Bruce D."/>
            <person name="Goodwin L."/>
            <person name="Pitluck S."/>
            <person name="Sims D."/>
            <person name="Brettin T."/>
            <person name="Detter J.C."/>
            <person name="Han C."/>
            <person name="Kuske C.R."/>
            <person name="Schmutz J."/>
            <person name="Larimer F."/>
            <person name="Land M."/>
            <person name="Hauser L."/>
            <person name="Kyrpides N."/>
            <person name="Kim E."/>
            <person name="Zhao J.-S."/>
            <person name="Richardson P."/>
        </authorList>
    </citation>
    <scope>NUCLEOTIDE SEQUENCE [LARGE SCALE GENOMIC DNA]</scope>
    <source>
        <strain>HAW-EB4</strain>
    </source>
</reference>
<sequence>MMTRKRPLALLILDGWGYRENTQKNAVFHANTPVLDQLTAKYPNSLISGSGIDVGLPDGQMGNSEVGHINIGSGRIVYQELTRISKAIDDGEFDTNPTLIKAIDDAIKADAAVHIMGLLSPGGVHSHQDHIEAMCRLSVKRGAKKVYLHAFLDGRDTPPRSAKPGLAHFEELFKTLGTGQVASLIGRYYAMDRDNRWDRVSQAYELITEGKGLHQATSAVEGIEAAYTRDENDEFVGSTAIPDAQGNIIKLEDNDALIFMNFRADRARQITRSFINADFDGFKRAVTPKINFVMLTEYAADIKAAIAYPSSDLVNTLGETLQNRDLTQLRISETEKYAHVTFFFNGGKEEPFKGEDRILVQSPKVATYDLQPEMSSVELTDKLVEAIESTQYDVIICNYPNGDMVGHTGNFDAAVKACEAVDSCIGRIVEALEKVGGECLITADHGNAEQMTDESTGQAHTAHTSELVPLIYVGRDAEIEKGGRLSDLAPTMLTLMGQEVPAEMTGRSIIQLKE</sequence>